<gene>
    <name evidence="1" type="primary">zapD</name>
    <name type="ordered locus">VP2528</name>
</gene>
<keyword id="KW-0002">3D-structure</keyword>
<keyword id="KW-0131">Cell cycle</keyword>
<keyword id="KW-0132">Cell division</keyword>
<keyword id="KW-0963">Cytoplasm</keyword>
<keyword id="KW-0717">Septation</keyword>
<organism>
    <name type="scientific">Vibrio parahaemolyticus serotype O3:K6 (strain RIMD 2210633)</name>
    <dbReference type="NCBI Taxonomy" id="223926"/>
    <lineage>
        <taxon>Bacteria</taxon>
        <taxon>Pseudomonadati</taxon>
        <taxon>Pseudomonadota</taxon>
        <taxon>Gammaproteobacteria</taxon>
        <taxon>Vibrionales</taxon>
        <taxon>Vibrionaceae</taxon>
        <taxon>Vibrio</taxon>
    </lineage>
</organism>
<protein>
    <recommendedName>
        <fullName evidence="1">Cell division protein ZapD</fullName>
    </recommendedName>
    <alternativeName>
        <fullName evidence="1">Z ring-associated protein D</fullName>
    </alternativeName>
</protein>
<evidence type="ECO:0000255" key="1">
    <source>
        <dbReference type="HAMAP-Rule" id="MF_01092"/>
    </source>
</evidence>
<evidence type="ECO:0007829" key="2">
    <source>
        <dbReference type="PDB" id="2OEZ"/>
    </source>
</evidence>
<dbReference type="EMBL" id="BA000031">
    <property type="protein sequence ID" value="BAC60791.1"/>
    <property type="molecule type" value="Genomic_DNA"/>
</dbReference>
<dbReference type="RefSeq" id="NP_798907.1">
    <property type="nucleotide sequence ID" value="NC_004603.1"/>
</dbReference>
<dbReference type="RefSeq" id="WP_005480890.1">
    <property type="nucleotide sequence ID" value="NC_004603.1"/>
</dbReference>
<dbReference type="PDB" id="2OEZ">
    <property type="method" value="X-ray"/>
    <property type="resolution" value="1.97 A"/>
    <property type="chains" value="A/B=2-245"/>
</dbReference>
<dbReference type="PDBsum" id="2OEZ"/>
<dbReference type="SMR" id="Q87LT3"/>
<dbReference type="GeneID" id="1190043"/>
<dbReference type="KEGG" id="vpa:VP2528"/>
<dbReference type="PATRIC" id="fig|223926.6.peg.2425"/>
<dbReference type="eggNOG" id="COG4582">
    <property type="taxonomic scope" value="Bacteria"/>
</dbReference>
<dbReference type="HOGENOM" id="CLU_076303_0_0_6"/>
<dbReference type="EvolutionaryTrace" id="Q87LT3"/>
<dbReference type="Proteomes" id="UP000002493">
    <property type="component" value="Chromosome 1"/>
</dbReference>
<dbReference type="GO" id="GO:0032153">
    <property type="term" value="C:cell division site"/>
    <property type="evidence" value="ECO:0007669"/>
    <property type="project" value="TreeGrafter"/>
</dbReference>
<dbReference type="GO" id="GO:0005737">
    <property type="term" value="C:cytoplasm"/>
    <property type="evidence" value="ECO:0007669"/>
    <property type="project" value="UniProtKB-SubCell"/>
</dbReference>
<dbReference type="GO" id="GO:0000917">
    <property type="term" value="P:division septum assembly"/>
    <property type="evidence" value="ECO:0007669"/>
    <property type="project" value="UniProtKB-KW"/>
</dbReference>
<dbReference type="GO" id="GO:0043093">
    <property type="term" value="P:FtsZ-dependent cytokinesis"/>
    <property type="evidence" value="ECO:0007669"/>
    <property type="project" value="UniProtKB-UniRule"/>
</dbReference>
<dbReference type="Gene3D" id="1.10.3900.10">
    <property type="entry name" value="YacF-like"/>
    <property type="match status" value="1"/>
</dbReference>
<dbReference type="Gene3D" id="2.60.440.10">
    <property type="entry name" value="YacF-like domains"/>
    <property type="match status" value="1"/>
</dbReference>
<dbReference type="HAMAP" id="MF_01092">
    <property type="entry name" value="ZapD"/>
    <property type="match status" value="1"/>
</dbReference>
<dbReference type="InterPro" id="IPR009777">
    <property type="entry name" value="ZapD"/>
</dbReference>
<dbReference type="InterPro" id="IPR027462">
    <property type="entry name" value="ZapD_C"/>
</dbReference>
<dbReference type="InterPro" id="IPR036268">
    <property type="entry name" value="ZapD_sf"/>
</dbReference>
<dbReference type="NCBIfam" id="NF003655">
    <property type="entry name" value="PRK05287.1-3"/>
    <property type="match status" value="1"/>
</dbReference>
<dbReference type="NCBIfam" id="NF003656">
    <property type="entry name" value="PRK05287.1-4"/>
    <property type="match status" value="1"/>
</dbReference>
<dbReference type="PANTHER" id="PTHR39455">
    <property type="entry name" value="CELL DIVISION PROTEIN ZAPD"/>
    <property type="match status" value="1"/>
</dbReference>
<dbReference type="PANTHER" id="PTHR39455:SF1">
    <property type="entry name" value="CELL DIVISION PROTEIN ZAPD"/>
    <property type="match status" value="1"/>
</dbReference>
<dbReference type="Pfam" id="PF07072">
    <property type="entry name" value="ZapD"/>
    <property type="match status" value="1"/>
</dbReference>
<dbReference type="SUPFAM" id="SSF160950">
    <property type="entry name" value="YacF-like"/>
    <property type="match status" value="1"/>
</dbReference>
<feature type="chain" id="PRO_0000211684" description="Cell division protein ZapD">
    <location>
        <begin position="1"/>
        <end position="246"/>
    </location>
</feature>
<feature type="strand" evidence="2">
    <location>
        <begin position="3"/>
        <end position="11"/>
    </location>
</feature>
<feature type="helix" evidence="2">
    <location>
        <begin position="12"/>
        <end position="30"/>
    </location>
</feature>
<feature type="helix" evidence="2">
    <location>
        <begin position="38"/>
        <end position="55"/>
    </location>
</feature>
<feature type="helix" evidence="2">
    <location>
        <begin position="58"/>
        <end position="74"/>
    </location>
</feature>
<feature type="turn" evidence="2">
    <location>
        <begin position="75"/>
        <end position="78"/>
    </location>
</feature>
<feature type="helix" evidence="2">
    <location>
        <begin position="84"/>
        <end position="103"/>
    </location>
</feature>
<feature type="helix" evidence="2">
    <location>
        <begin position="109"/>
        <end position="113"/>
    </location>
</feature>
<feature type="helix" evidence="2">
    <location>
        <begin position="115"/>
        <end position="125"/>
    </location>
</feature>
<feature type="helix" evidence="2">
    <location>
        <begin position="132"/>
        <end position="134"/>
    </location>
</feature>
<feature type="helix" evidence="2">
    <location>
        <begin position="136"/>
        <end position="142"/>
    </location>
</feature>
<feature type="helix" evidence="2">
    <location>
        <begin position="146"/>
        <end position="158"/>
    </location>
</feature>
<feature type="helix" evidence="2">
    <location>
        <begin position="161"/>
        <end position="176"/>
    </location>
</feature>
<feature type="strand" evidence="2">
    <location>
        <begin position="181"/>
        <end position="186"/>
    </location>
</feature>
<feature type="strand" evidence="2">
    <location>
        <begin position="189"/>
        <end position="193"/>
    </location>
</feature>
<feature type="strand" evidence="2">
    <location>
        <begin position="199"/>
        <end position="205"/>
    </location>
</feature>
<feature type="helix" evidence="2">
    <location>
        <begin position="206"/>
        <end position="208"/>
    </location>
</feature>
<feature type="strand" evidence="2">
    <location>
        <begin position="210"/>
        <end position="217"/>
    </location>
</feature>
<feature type="strand" evidence="2">
    <location>
        <begin position="220"/>
        <end position="227"/>
    </location>
</feature>
<feature type="turn" evidence="2">
    <location>
        <begin position="228"/>
        <end position="230"/>
    </location>
</feature>
<feature type="strand" evidence="2">
    <location>
        <begin position="231"/>
        <end position="233"/>
    </location>
</feature>
<feature type="strand" evidence="2">
    <location>
        <begin position="238"/>
        <end position="245"/>
    </location>
</feature>
<reference key="1">
    <citation type="journal article" date="2003" name="Lancet">
        <title>Genome sequence of Vibrio parahaemolyticus: a pathogenic mechanism distinct from that of V. cholerae.</title>
        <authorList>
            <person name="Makino K."/>
            <person name="Oshima K."/>
            <person name="Kurokawa K."/>
            <person name="Yokoyama K."/>
            <person name="Uda T."/>
            <person name="Tagomori K."/>
            <person name="Iijima Y."/>
            <person name="Najima M."/>
            <person name="Nakano M."/>
            <person name="Yamashita A."/>
            <person name="Kubota Y."/>
            <person name="Kimura S."/>
            <person name="Yasunaga T."/>
            <person name="Honda T."/>
            <person name="Shinagawa H."/>
            <person name="Hattori M."/>
            <person name="Iida T."/>
        </authorList>
    </citation>
    <scope>NUCLEOTIDE SEQUENCE [LARGE SCALE GENOMIC DNA]</scope>
    <source>
        <strain>RIMD 2210633</strain>
    </source>
</reference>
<reference key="2">
    <citation type="submission" date="2011-07" db="PDB data bank">
        <title>Crystal structure of the protein of unknown function VP2528 from Vibrio parahaemolyticus.</title>
        <authorList>
            <consortium name="Midwest center for structural genomics (MCSG)"/>
        </authorList>
    </citation>
    <scope>X-RAY CRYSTALLOGRAPHY (1.97 ANGSTROMS) OF 2-245</scope>
    <source>
        <strain>RIMD 2210633</strain>
    </source>
</reference>
<proteinExistence type="evidence at protein level"/>
<accession>Q87LT3</accession>
<comment type="function">
    <text evidence="1">Cell division factor that enhances FtsZ-ring assembly. Directly interacts with FtsZ and promotes bundling of FtsZ protofilaments, with a reduction in FtsZ GTPase activity.</text>
</comment>
<comment type="subunit">
    <text evidence="1">Interacts with FtsZ.</text>
</comment>
<comment type="subcellular location">
    <subcellularLocation>
        <location evidence="1">Cytoplasm</location>
    </subcellularLocation>
    <text evidence="1">Localizes to mid-cell in an FtsZ-dependent manner.</text>
</comment>
<comment type="similarity">
    <text evidence="1">Belongs to the ZapD family.</text>
</comment>
<name>ZAPD_VIBPA</name>
<sequence>MTTHKFEHPLNEKTRIYLRVESLLRQAHLASGFADNHQYQLFFRALFDMVEIFEQIQLKSELAKDLEKQRLSYRHWLNVEGVDQEALNSLLNEIDVVHSQLMGAERFGQALKEDRFLSSIRQRFNLPGGSCCFDLPALHYWLHLPIERKKHDANQWQKSLKPLSDALTLWLKLARETGHFKAQIARAGFFQSDADEANILRLHIPMKYGVYPMISGHKNRFAIKFMAFENGQACSQDVEFELAVCS</sequence>